<dbReference type="EC" id="4.3.2.10"/>
<dbReference type="EC" id="3.5.1.2"/>
<dbReference type="EMBL" id="BX950229">
    <property type="protein sequence ID" value="CAF29812.1"/>
    <property type="molecule type" value="Genomic_DNA"/>
</dbReference>
<dbReference type="RefSeq" id="WP_011170200.1">
    <property type="nucleotide sequence ID" value="NC_005791.1"/>
</dbReference>
<dbReference type="SMR" id="P61782"/>
<dbReference type="STRING" id="267377.MMP0256"/>
<dbReference type="EnsemblBacteria" id="CAF29812">
    <property type="protein sequence ID" value="CAF29812"/>
    <property type="gene ID" value="MMP0256"/>
</dbReference>
<dbReference type="GeneID" id="2762179"/>
<dbReference type="KEGG" id="mmp:MMP0256"/>
<dbReference type="PATRIC" id="fig|267377.15.peg.258"/>
<dbReference type="eggNOG" id="arCOG00089">
    <property type="taxonomic scope" value="Archaea"/>
</dbReference>
<dbReference type="HOGENOM" id="CLU_071837_2_2_2"/>
<dbReference type="OrthoDB" id="33401at2157"/>
<dbReference type="UniPathway" id="UPA00031">
    <property type="reaction ID" value="UER00010"/>
</dbReference>
<dbReference type="Proteomes" id="UP000000590">
    <property type="component" value="Chromosome"/>
</dbReference>
<dbReference type="GO" id="GO:0005737">
    <property type="term" value="C:cytoplasm"/>
    <property type="evidence" value="ECO:0007669"/>
    <property type="project" value="UniProtKB-SubCell"/>
</dbReference>
<dbReference type="GO" id="GO:0004359">
    <property type="term" value="F:glutaminase activity"/>
    <property type="evidence" value="ECO:0007669"/>
    <property type="project" value="UniProtKB-EC"/>
</dbReference>
<dbReference type="GO" id="GO:0000107">
    <property type="term" value="F:imidazoleglycerol-phosphate synthase activity"/>
    <property type="evidence" value="ECO:0007669"/>
    <property type="project" value="UniProtKB-UniRule"/>
</dbReference>
<dbReference type="GO" id="GO:0016829">
    <property type="term" value="F:lyase activity"/>
    <property type="evidence" value="ECO:0007669"/>
    <property type="project" value="UniProtKB-KW"/>
</dbReference>
<dbReference type="GO" id="GO:0000105">
    <property type="term" value="P:L-histidine biosynthetic process"/>
    <property type="evidence" value="ECO:0007669"/>
    <property type="project" value="UniProtKB-UniRule"/>
</dbReference>
<dbReference type="CDD" id="cd01748">
    <property type="entry name" value="GATase1_IGP_Synthase"/>
    <property type="match status" value="1"/>
</dbReference>
<dbReference type="FunFam" id="3.40.50.880:FF:000009">
    <property type="entry name" value="Imidazole glycerol phosphate synthase subunit HisH"/>
    <property type="match status" value="1"/>
</dbReference>
<dbReference type="Gene3D" id="3.40.50.880">
    <property type="match status" value="1"/>
</dbReference>
<dbReference type="HAMAP" id="MF_00278">
    <property type="entry name" value="HisH"/>
    <property type="match status" value="1"/>
</dbReference>
<dbReference type="InterPro" id="IPR029062">
    <property type="entry name" value="Class_I_gatase-like"/>
</dbReference>
<dbReference type="InterPro" id="IPR017926">
    <property type="entry name" value="GATASE"/>
</dbReference>
<dbReference type="InterPro" id="IPR010139">
    <property type="entry name" value="Imidazole-glycPsynth_HisH"/>
</dbReference>
<dbReference type="NCBIfam" id="TIGR01855">
    <property type="entry name" value="IMP_synth_hisH"/>
    <property type="match status" value="1"/>
</dbReference>
<dbReference type="PANTHER" id="PTHR42701">
    <property type="entry name" value="IMIDAZOLE GLYCEROL PHOSPHATE SYNTHASE SUBUNIT HISH"/>
    <property type="match status" value="1"/>
</dbReference>
<dbReference type="PANTHER" id="PTHR42701:SF1">
    <property type="entry name" value="IMIDAZOLE GLYCEROL PHOSPHATE SYNTHASE SUBUNIT HISH"/>
    <property type="match status" value="1"/>
</dbReference>
<dbReference type="Pfam" id="PF00117">
    <property type="entry name" value="GATase"/>
    <property type="match status" value="1"/>
</dbReference>
<dbReference type="PIRSF" id="PIRSF000495">
    <property type="entry name" value="Amidotransf_hisH"/>
    <property type="match status" value="1"/>
</dbReference>
<dbReference type="SUPFAM" id="SSF52317">
    <property type="entry name" value="Class I glutamine amidotransferase-like"/>
    <property type="match status" value="1"/>
</dbReference>
<dbReference type="PROSITE" id="PS51273">
    <property type="entry name" value="GATASE_TYPE_1"/>
    <property type="match status" value="1"/>
</dbReference>
<name>HIS51_METMP</name>
<comment type="function">
    <text evidence="1">IGPS catalyzes the conversion of PRFAR and glutamine to IGP, AICAR and glutamate. The HisH subunit provides the glutamine amidotransferase activity that produces the ammonia necessary to HisF for the synthesis of IGP and AICAR (By similarity).</text>
</comment>
<comment type="catalytic activity">
    <reaction>
        <text>5-[(5-phospho-1-deoxy-D-ribulos-1-ylimino)methylamino]-1-(5-phospho-beta-D-ribosyl)imidazole-4-carboxamide + L-glutamine = D-erythro-1-(imidazol-4-yl)glycerol 3-phosphate + 5-amino-1-(5-phospho-beta-D-ribosyl)imidazole-4-carboxamide + L-glutamate + H(+)</text>
        <dbReference type="Rhea" id="RHEA:24793"/>
        <dbReference type="ChEBI" id="CHEBI:15378"/>
        <dbReference type="ChEBI" id="CHEBI:29985"/>
        <dbReference type="ChEBI" id="CHEBI:58278"/>
        <dbReference type="ChEBI" id="CHEBI:58359"/>
        <dbReference type="ChEBI" id="CHEBI:58475"/>
        <dbReference type="ChEBI" id="CHEBI:58525"/>
        <dbReference type="EC" id="4.3.2.10"/>
    </reaction>
</comment>
<comment type="catalytic activity">
    <reaction>
        <text>L-glutamine + H2O = L-glutamate + NH4(+)</text>
        <dbReference type="Rhea" id="RHEA:15889"/>
        <dbReference type="ChEBI" id="CHEBI:15377"/>
        <dbReference type="ChEBI" id="CHEBI:28938"/>
        <dbReference type="ChEBI" id="CHEBI:29985"/>
        <dbReference type="ChEBI" id="CHEBI:58359"/>
        <dbReference type="EC" id="3.5.1.2"/>
    </reaction>
</comment>
<comment type="pathway">
    <text>Amino-acid biosynthesis; L-histidine biosynthesis; L-histidine from 5-phospho-alpha-D-ribose 1-diphosphate: step 5/9.</text>
</comment>
<comment type="subunit">
    <text evidence="1">Heterodimer of HisH and HisF.</text>
</comment>
<comment type="subcellular location">
    <subcellularLocation>
        <location evidence="1">Cytoplasm</location>
    </subcellularLocation>
</comment>
<accession>P61782</accession>
<reference key="1">
    <citation type="journal article" date="2004" name="J. Bacteriol.">
        <title>Complete genome sequence of the genetically tractable hydrogenotrophic methanogen Methanococcus maripaludis.</title>
        <authorList>
            <person name="Hendrickson E.L."/>
            <person name="Kaul R."/>
            <person name="Zhou Y."/>
            <person name="Bovee D."/>
            <person name="Chapman P."/>
            <person name="Chung J."/>
            <person name="Conway de Macario E."/>
            <person name="Dodsworth J.A."/>
            <person name="Gillett W."/>
            <person name="Graham D.E."/>
            <person name="Hackett M."/>
            <person name="Haydock A.K."/>
            <person name="Kang A."/>
            <person name="Land M.L."/>
            <person name="Levy R."/>
            <person name="Lie T.J."/>
            <person name="Major T.A."/>
            <person name="Moore B.C."/>
            <person name="Porat I."/>
            <person name="Palmeiri A."/>
            <person name="Rouse G."/>
            <person name="Saenphimmachak C."/>
            <person name="Soell D."/>
            <person name="Van Dien S."/>
            <person name="Wang T."/>
            <person name="Whitman W.B."/>
            <person name="Xia Q."/>
            <person name="Zhang Y."/>
            <person name="Larimer F.W."/>
            <person name="Olson M.V."/>
            <person name="Leigh J.A."/>
        </authorList>
    </citation>
    <scope>NUCLEOTIDE SEQUENCE [LARGE SCALE GENOMIC DNA]</scope>
    <source>
        <strain>DSM 14266 / JCM 13030 / NBRC 101832 / S2 / LL</strain>
    </source>
</reference>
<evidence type="ECO:0000250" key="1"/>
<sequence length="203" mass="22676">MIAIIDYNAGNLRSIEKALELYTKNIVVTSDPETILSADKLVLPGVGNFGDSMKNISQKTGDCSLNEIINKCVQKVPFLGICLGMQLLLEKSEECPETPGLGVIKGDVIKFKHSEKIPHMGWNTVNQVQDIPLFEGIANNEYFYFVHSYHVNPSEKDVISGTTNYGYEFPCILNKKNVYATQFHPEKSGKNGLKMIENFVELI</sequence>
<feature type="chain" id="PRO_0000152461" description="Imidazole glycerol phosphate synthase subunit HisH 1">
    <location>
        <begin position="1"/>
        <end position="203"/>
    </location>
</feature>
<feature type="domain" description="Glutamine amidotransferase type-1">
    <location>
        <begin position="1"/>
        <end position="203"/>
    </location>
</feature>
<feature type="active site" description="Nucleophile" evidence="1">
    <location>
        <position position="82"/>
    </location>
</feature>
<feature type="active site" evidence="1">
    <location>
        <position position="184"/>
    </location>
</feature>
<feature type="active site" evidence="1">
    <location>
        <position position="186"/>
    </location>
</feature>
<keyword id="KW-0028">Amino-acid biosynthesis</keyword>
<keyword id="KW-0963">Cytoplasm</keyword>
<keyword id="KW-0315">Glutamine amidotransferase</keyword>
<keyword id="KW-0368">Histidine biosynthesis</keyword>
<keyword id="KW-0378">Hydrolase</keyword>
<keyword id="KW-0456">Lyase</keyword>
<keyword id="KW-1185">Reference proteome</keyword>
<gene>
    <name type="primary">hisH1</name>
    <name type="synonym">hisH</name>
    <name type="ordered locus">MMP0256</name>
</gene>
<organism>
    <name type="scientific">Methanococcus maripaludis (strain DSM 14266 / JCM 13030 / NBRC 101832 / S2 / LL)</name>
    <dbReference type="NCBI Taxonomy" id="267377"/>
    <lineage>
        <taxon>Archaea</taxon>
        <taxon>Methanobacteriati</taxon>
        <taxon>Methanobacteriota</taxon>
        <taxon>Methanomada group</taxon>
        <taxon>Methanococci</taxon>
        <taxon>Methanococcales</taxon>
        <taxon>Methanococcaceae</taxon>
        <taxon>Methanococcus</taxon>
    </lineage>
</organism>
<proteinExistence type="inferred from homology"/>
<protein>
    <recommendedName>
        <fullName>Imidazole glycerol phosphate synthase subunit HisH 1</fullName>
        <ecNumber>4.3.2.10</ecNumber>
    </recommendedName>
    <alternativeName>
        <fullName>IGP synthase glutaminase subunit 1</fullName>
        <ecNumber>3.5.1.2</ecNumber>
    </alternativeName>
    <alternativeName>
        <fullName>IGP synthase subunit HisH 1</fullName>
    </alternativeName>
    <alternativeName>
        <fullName>ImGP synthase subunit HisH 1</fullName>
        <shortName>IGPS subunit HisH 1</shortName>
    </alternativeName>
</protein>